<sequence length="280" mass="32038">MEIIKTVVELQTALLKIREQNKSIGFVPTMGALHRGHIELVKQSVVENTISIVSIFVNPTQFNDKNDLLKYPRTLNADCKLLLQETNNHFVFAPSVEEIYSETNIQQFKFGHLETVMEGKLRPGHFNGVAQVVSRLFKIVKPNCAYFGEKDFQQLTIIRTLVRLLNLNVKIIPHPTVREPNGLALSSRNIHLTPKQKKNAGMIFKTLSKSRKEKNILSIQELKQKTINKINCIPDFRVEYFDLVDGNTLQSITDWKDTKYIVGCIAVYIGEVRLIDNITY</sequence>
<reference key="1">
    <citation type="journal article" date="2008" name="Science">
        <title>Genome of an endosymbiont coupling N2 fixation to cellulolysis within RT protist cells in termite gut.</title>
        <authorList>
            <person name="Hongoh Y."/>
            <person name="Sharma V.K."/>
            <person name="Prakash T."/>
            <person name="Noda S."/>
            <person name="Toh H."/>
            <person name="Taylor T.D."/>
            <person name="Kudo T."/>
            <person name="Sakaki Y."/>
            <person name="Toyoda A."/>
            <person name="Hattori M."/>
            <person name="Ohkuma M."/>
        </authorList>
    </citation>
    <scope>NUCLEOTIDE SEQUENCE [LARGE SCALE GENOMIC DNA]</scope>
</reference>
<keyword id="KW-0067">ATP-binding</keyword>
<keyword id="KW-0963">Cytoplasm</keyword>
<keyword id="KW-0436">Ligase</keyword>
<keyword id="KW-0547">Nucleotide-binding</keyword>
<keyword id="KW-0566">Pantothenate biosynthesis</keyword>
<keyword id="KW-1185">Reference proteome</keyword>
<dbReference type="EC" id="6.3.2.1" evidence="1"/>
<dbReference type="EMBL" id="AP010656">
    <property type="protein sequence ID" value="BAG84000.1"/>
    <property type="molecule type" value="Genomic_DNA"/>
</dbReference>
<dbReference type="RefSeq" id="WP_012573756.1">
    <property type="nucleotide sequence ID" value="NC_011565.1"/>
</dbReference>
<dbReference type="SMR" id="B6YS28"/>
<dbReference type="STRING" id="511995.CFPG_737"/>
<dbReference type="KEGG" id="aps:CFPG_737"/>
<dbReference type="eggNOG" id="COG0414">
    <property type="taxonomic scope" value="Bacteria"/>
</dbReference>
<dbReference type="HOGENOM" id="CLU_047148_0_0_10"/>
<dbReference type="OrthoDB" id="9773087at2"/>
<dbReference type="UniPathway" id="UPA00028">
    <property type="reaction ID" value="UER00005"/>
</dbReference>
<dbReference type="Proteomes" id="UP000000723">
    <property type="component" value="Chromosome"/>
</dbReference>
<dbReference type="GO" id="GO:0005829">
    <property type="term" value="C:cytosol"/>
    <property type="evidence" value="ECO:0007669"/>
    <property type="project" value="TreeGrafter"/>
</dbReference>
<dbReference type="GO" id="GO:0005524">
    <property type="term" value="F:ATP binding"/>
    <property type="evidence" value="ECO:0007669"/>
    <property type="project" value="UniProtKB-KW"/>
</dbReference>
<dbReference type="GO" id="GO:0004592">
    <property type="term" value="F:pantoate-beta-alanine ligase activity"/>
    <property type="evidence" value="ECO:0007669"/>
    <property type="project" value="UniProtKB-UniRule"/>
</dbReference>
<dbReference type="GO" id="GO:0015940">
    <property type="term" value="P:pantothenate biosynthetic process"/>
    <property type="evidence" value="ECO:0007669"/>
    <property type="project" value="UniProtKB-UniRule"/>
</dbReference>
<dbReference type="CDD" id="cd00560">
    <property type="entry name" value="PanC"/>
    <property type="match status" value="1"/>
</dbReference>
<dbReference type="Gene3D" id="3.40.50.620">
    <property type="entry name" value="HUPs"/>
    <property type="match status" value="1"/>
</dbReference>
<dbReference type="Gene3D" id="3.30.1300.10">
    <property type="entry name" value="Pantoate-beta-alanine ligase, C-terminal domain"/>
    <property type="match status" value="1"/>
</dbReference>
<dbReference type="HAMAP" id="MF_00158">
    <property type="entry name" value="PanC"/>
    <property type="match status" value="1"/>
</dbReference>
<dbReference type="InterPro" id="IPR003721">
    <property type="entry name" value="Pantoate_ligase"/>
</dbReference>
<dbReference type="InterPro" id="IPR042176">
    <property type="entry name" value="Pantoate_ligase_C"/>
</dbReference>
<dbReference type="InterPro" id="IPR014729">
    <property type="entry name" value="Rossmann-like_a/b/a_fold"/>
</dbReference>
<dbReference type="NCBIfam" id="TIGR00018">
    <property type="entry name" value="panC"/>
    <property type="match status" value="1"/>
</dbReference>
<dbReference type="PANTHER" id="PTHR21299">
    <property type="entry name" value="CYTIDYLATE KINASE/PANTOATE-BETA-ALANINE LIGASE"/>
    <property type="match status" value="1"/>
</dbReference>
<dbReference type="PANTHER" id="PTHR21299:SF1">
    <property type="entry name" value="PANTOATE--BETA-ALANINE LIGASE"/>
    <property type="match status" value="1"/>
</dbReference>
<dbReference type="Pfam" id="PF02569">
    <property type="entry name" value="Pantoate_ligase"/>
    <property type="match status" value="1"/>
</dbReference>
<dbReference type="SUPFAM" id="SSF52374">
    <property type="entry name" value="Nucleotidylyl transferase"/>
    <property type="match status" value="1"/>
</dbReference>
<accession>B6YS28</accession>
<proteinExistence type="inferred from homology"/>
<gene>
    <name evidence="1" type="primary">panC</name>
    <name type="ordered locus">CFPG_737</name>
</gene>
<organism>
    <name type="scientific">Azobacteroides pseudotrichonymphae genomovar. CFP2</name>
    <dbReference type="NCBI Taxonomy" id="511995"/>
    <lineage>
        <taxon>Bacteria</taxon>
        <taxon>Pseudomonadati</taxon>
        <taxon>Bacteroidota</taxon>
        <taxon>Bacteroidia</taxon>
        <taxon>Bacteroidales</taxon>
        <taxon>Candidatus Azobacteroides</taxon>
    </lineage>
</organism>
<comment type="function">
    <text evidence="1">Catalyzes the condensation of pantoate with beta-alanine in an ATP-dependent reaction via a pantoyl-adenylate intermediate.</text>
</comment>
<comment type="catalytic activity">
    <reaction evidence="1">
        <text>(R)-pantoate + beta-alanine + ATP = (R)-pantothenate + AMP + diphosphate + H(+)</text>
        <dbReference type="Rhea" id="RHEA:10912"/>
        <dbReference type="ChEBI" id="CHEBI:15378"/>
        <dbReference type="ChEBI" id="CHEBI:15980"/>
        <dbReference type="ChEBI" id="CHEBI:29032"/>
        <dbReference type="ChEBI" id="CHEBI:30616"/>
        <dbReference type="ChEBI" id="CHEBI:33019"/>
        <dbReference type="ChEBI" id="CHEBI:57966"/>
        <dbReference type="ChEBI" id="CHEBI:456215"/>
        <dbReference type="EC" id="6.3.2.1"/>
    </reaction>
</comment>
<comment type="pathway">
    <text evidence="1">Cofactor biosynthesis; (R)-pantothenate biosynthesis; (R)-pantothenate from (R)-pantoate and beta-alanine: step 1/1.</text>
</comment>
<comment type="subunit">
    <text evidence="1">Homodimer.</text>
</comment>
<comment type="subcellular location">
    <subcellularLocation>
        <location evidence="1">Cytoplasm</location>
    </subcellularLocation>
</comment>
<comment type="miscellaneous">
    <text evidence="1">The reaction proceeds by a bi uni uni bi ping pong mechanism.</text>
</comment>
<comment type="similarity">
    <text evidence="1">Belongs to the pantothenate synthetase family.</text>
</comment>
<name>PANC_AZOPC</name>
<feature type="chain" id="PRO_1000097029" description="Pantothenate synthetase">
    <location>
        <begin position="1"/>
        <end position="280"/>
    </location>
</feature>
<feature type="active site" description="Proton donor" evidence="1">
    <location>
        <position position="37"/>
    </location>
</feature>
<feature type="binding site" evidence="1">
    <location>
        <begin position="30"/>
        <end position="37"/>
    </location>
    <ligand>
        <name>ATP</name>
        <dbReference type="ChEBI" id="CHEBI:30616"/>
    </ligand>
</feature>
<feature type="binding site" evidence="1">
    <location>
        <position position="61"/>
    </location>
    <ligand>
        <name>(R)-pantoate</name>
        <dbReference type="ChEBI" id="CHEBI:15980"/>
    </ligand>
</feature>
<feature type="binding site" evidence="1">
    <location>
        <position position="61"/>
    </location>
    <ligand>
        <name>beta-alanine</name>
        <dbReference type="ChEBI" id="CHEBI:57966"/>
    </ligand>
</feature>
<feature type="binding site" evidence="1">
    <location>
        <begin position="148"/>
        <end position="151"/>
    </location>
    <ligand>
        <name>ATP</name>
        <dbReference type="ChEBI" id="CHEBI:30616"/>
    </ligand>
</feature>
<feature type="binding site" evidence="1">
    <location>
        <position position="154"/>
    </location>
    <ligand>
        <name>(R)-pantoate</name>
        <dbReference type="ChEBI" id="CHEBI:15980"/>
    </ligand>
</feature>
<feature type="binding site" evidence="1">
    <location>
        <position position="177"/>
    </location>
    <ligand>
        <name>ATP</name>
        <dbReference type="ChEBI" id="CHEBI:30616"/>
    </ligand>
</feature>
<feature type="binding site" evidence="1">
    <location>
        <begin position="185"/>
        <end position="188"/>
    </location>
    <ligand>
        <name>ATP</name>
        <dbReference type="ChEBI" id="CHEBI:30616"/>
    </ligand>
</feature>
<evidence type="ECO:0000255" key="1">
    <source>
        <dbReference type="HAMAP-Rule" id="MF_00158"/>
    </source>
</evidence>
<protein>
    <recommendedName>
        <fullName evidence="1">Pantothenate synthetase</fullName>
        <shortName evidence="1">PS</shortName>
        <ecNumber evidence="1">6.3.2.1</ecNumber>
    </recommendedName>
    <alternativeName>
        <fullName evidence="1">Pantoate--beta-alanine ligase</fullName>
    </alternativeName>
    <alternativeName>
        <fullName evidence="1">Pantoate-activating enzyme</fullName>
    </alternativeName>
</protein>